<evidence type="ECO:0000255" key="1">
    <source>
        <dbReference type="HAMAP-Rule" id="MF_01579"/>
    </source>
</evidence>
<reference key="1">
    <citation type="journal article" date="2009" name="PLoS Genet.">
        <title>Organised genome dynamics in the Escherichia coli species results in highly diverse adaptive paths.</title>
        <authorList>
            <person name="Touchon M."/>
            <person name="Hoede C."/>
            <person name="Tenaillon O."/>
            <person name="Barbe V."/>
            <person name="Baeriswyl S."/>
            <person name="Bidet P."/>
            <person name="Bingen E."/>
            <person name="Bonacorsi S."/>
            <person name="Bouchier C."/>
            <person name="Bouvet O."/>
            <person name="Calteau A."/>
            <person name="Chiapello H."/>
            <person name="Clermont O."/>
            <person name="Cruveiller S."/>
            <person name="Danchin A."/>
            <person name="Diard M."/>
            <person name="Dossat C."/>
            <person name="Karoui M.E."/>
            <person name="Frapy E."/>
            <person name="Garry L."/>
            <person name="Ghigo J.M."/>
            <person name="Gilles A.M."/>
            <person name="Johnson J."/>
            <person name="Le Bouguenec C."/>
            <person name="Lescat M."/>
            <person name="Mangenot S."/>
            <person name="Martinez-Jehanne V."/>
            <person name="Matic I."/>
            <person name="Nassif X."/>
            <person name="Oztas S."/>
            <person name="Petit M.A."/>
            <person name="Pichon C."/>
            <person name="Rouy Z."/>
            <person name="Ruf C.S."/>
            <person name="Schneider D."/>
            <person name="Tourret J."/>
            <person name="Vacherie B."/>
            <person name="Vallenet D."/>
            <person name="Medigue C."/>
            <person name="Rocha E.P.C."/>
            <person name="Denamur E."/>
        </authorList>
    </citation>
    <scope>NUCLEOTIDE SEQUENCE [LARGE SCALE GENOMIC DNA]</scope>
    <source>
        <strain>IAI39 / ExPEC</strain>
    </source>
</reference>
<accession>B7NS84</accession>
<sequence>MAQHTVYFPDAFLTQMREAMPSTLSFDDFLAACQRPLRRSIRVNTLKISVADFLQLTAPYGWTLTPIPWCEEGFWIERDNEDALPLGSTAEHLSGLFYIQEASSMLPVAALFADGNAPQRVMDVAAAPGSKTTQIAARMNNEGAILANEFSASRVKVLHANISRCGISNVALTHFDGRVFGAALPEMFDAILLDAPCSGEGVVRKDPDALKNWSPESNQEIAATQRELIDSAFHALRPGGTLVYSTCTLNREENEAVCLWLKETYPDAVEFLPLGDLFPGANKALTEEGFLHVFPQIYDCEGFFVARLRKTQAIPVLPAPKYKVGNFPFSPVKDREAGQIRQAAAGVGLNWDGNLRLWQRDKELWLFPVGIEALIGKVRFSRLGIKLAETHNKGYRWQHEAVIALASPDNVNAFELTPQEAEEWYRGRDVYPQAAPVADDVLVTFQHQPIGLAKRIGSRLKNSYPRELVRDGKLFTGNA</sequence>
<dbReference type="EC" id="2.1.1.178" evidence="1"/>
<dbReference type="EMBL" id="CU928164">
    <property type="protein sequence ID" value="CAR17349.1"/>
    <property type="molecule type" value="Genomic_DNA"/>
</dbReference>
<dbReference type="RefSeq" id="WP_012602287.1">
    <property type="nucleotide sequence ID" value="NC_011750.1"/>
</dbReference>
<dbReference type="RefSeq" id="YP_002407223.1">
    <property type="nucleotide sequence ID" value="NC_011750.1"/>
</dbReference>
<dbReference type="SMR" id="B7NS84"/>
<dbReference type="STRING" id="585057.ECIAI39_1215"/>
<dbReference type="KEGG" id="ect:ECIAI39_1215"/>
<dbReference type="PATRIC" id="fig|585057.6.peg.1274"/>
<dbReference type="HOGENOM" id="CLU_005316_6_2_6"/>
<dbReference type="Proteomes" id="UP000000749">
    <property type="component" value="Chromosome"/>
</dbReference>
<dbReference type="GO" id="GO:0005737">
    <property type="term" value="C:cytoplasm"/>
    <property type="evidence" value="ECO:0007669"/>
    <property type="project" value="UniProtKB-SubCell"/>
</dbReference>
<dbReference type="GO" id="GO:0003723">
    <property type="term" value="F:RNA binding"/>
    <property type="evidence" value="ECO:0007669"/>
    <property type="project" value="UniProtKB-KW"/>
</dbReference>
<dbReference type="GO" id="GO:0009383">
    <property type="term" value="F:rRNA (cytosine-C5-)-methyltransferase activity"/>
    <property type="evidence" value="ECO:0007669"/>
    <property type="project" value="TreeGrafter"/>
</dbReference>
<dbReference type="GO" id="GO:0070475">
    <property type="term" value="P:rRNA base methylation"/>
    <property type="evidence" value="ECO:0007669"/>
    <property type="project" value="TreeGrafter"/>
</dbReference>
<dbReference type="CDD" id="cd02440">
    <property type="entry name" value="AdoMet_MTases"/>
    <property type="match status" value="1"/>
</dbReference>
<dbReference type="FunFam" id="3.10.450.720:FF:000001">
    <property type="entry name" value="Ribosomal RNA small subunit methyltransferase F"/>
    <property type="match status" value="1"/>
</dbReference>
<dbReference type="FunFam" id="3.40.50.150:FF:000079">
    <property type="entry name" value="Ribosomal RNA small subunit methyltransferase F"/>
    <property type="match status" value="1"/>
</dbReference>
<dbReference type="Gene3D" id="3.10.450.720">
    <property type="match status" value="1"/>
</dbReference>
<dbReference type="Gene3D" id="3.40.50.150">
    <property type="entry name" value="Vaccinia Virus protein VP39"/>
    <property type="match status" value="1"/>
</dbReference>
<dbReference type="HAMAP" id="MF_01579">
    <property type="entry name" value="16SrRNA_methyltr_F"/>
    <property type="match status" value="1"/>
</dbReference>
<dbReference type="InterPro" id="IPR031341">
    <property type="entry name" value="Methyltr_RsmF_N"/>
</dbReference>
<dbReference type="InterPro" id="IPR049560">
    <property type="entry name" value="MeTrfase_RsmB-F_NOP2_cat"/>
</dbReference>
<dbReference type="InterPro" id="IPR001678">
    <property type="entry name" value="MeTrfase_RsmB-F_NOP2_dom"/>
</dbReference>
<dbReference type="InterPro" id="IPR027391">
    <property type="entry name" value="Nol1_Nop2_Fmu_2"/>
</dbReference>
<dbReference type="InterPro" id="IPR011023">
    <property type="entry name" value="Nop2p"/>
</dbReference>
<dbReference type="InterPro" id="IPR023267">
    <property type="entry name" value="RCMT"/>
</dbReference>
<dbReference type="InterPro" id="IPR023545">
    <property type="entry name" value="rRNA_ssu_MeTfrase_F"/>
</dbReference>
<dbReference type="InterPro" id="IPR018314">
    <property type="entry name" value="RsmB/NOL1/NOP2-like_CS"/>
</dbReference>
<dbReference type="InterPro" id="IPR029063">
    <property type="entry name" value="SAM-dependent_MTases_sf"/>
</dbReference>
<dbReference type="InterPro" id="IPR048457">
    <property type="entry name" value="YebU_pre-PUA_dom"/>
</dbReference>
<dbReference type="NCBIfam" id="TIGR00446">
    <property type="entry name" value="nop2p"/>
    <property type="match status" value="1"/>
</dbReference>
<dbReference type="NCBIfam" id="NF008898">
    <property type="entry name" value="PRK11933.1"/>
    <property type="match status" value="1"/>
</dbReference>
<dbReference type="PANTHER" id="PTHR22807:SF30">
    <property type="entry name" value="28S RRNA (CYTOSINE(4447)-C(5))-METHYLTRANSFERASE-RELATED"/>
    <property type="match status" value="1"/>
</dbReference>
<dbReference type="PANTHER" id="PTHR22807">
    <property type="entry name" value="NOP2 YEAST -RELATED NOL1/NOP2/FMU SUN DOMAIN-CONTAINING"/>
    <property type="match status" value="1"/>
</dbReference>
<dbReference type="Pfam" id="PF01189">
    <property type="entry name" value="Methyltr_RsmB-F"/>
    <property type="match status" value="1"/>
</dbReference>
<dbReference type="Pfam" id="PF17125">
    <property type="entry name" value="Methyltr_RsmF_N"/>
    <property type="match status" value="1"/>
</dbReference>
<dbReference type="Pfam" id="PF13636">
    <property type="entry name" value="Methyltranf_PUA"/>
    <property type="match status" value="1"/>
</dbReference>
<dbReference type="Pfam" id="PF21150">
    <property type="entry name" value="YebU_pre-PUA_dom"/>
    <property type="match status" value="1"/>
</dbReference>
<dbReference type="PRINTS" id="PR02008">
    <property type="entry name" value="RCMTFAMILY"/>
</dbReference>
<dbReference type="SUPFAM" id="SSF53335">
    <property type="entry name" value="S-adenosyl-L-methionine-dependent methyltransferases"/>
    <property type="match status" value="1"/>
</dbReference>
<dbReference type="PROSITE" id="PS01153">
    <property type="entry name" value="NOL1_NOP2_SUN"/>
    <property type="match status" value="1"/>
</dbReference>
<dbReference type="PROSITE" id="PS51686">
    <property type="entry name" value="SAM_MT_RSMB_NOP"/>
    <property type="match status" value="1"/>
</dbReference>
<proteinExistence type="inferred from homology"/>
<keyword id="KW-0963">Cytoplasm</keyword>
<keyword id="KW-0489">Methyltransferase</keyword>
<keyword id="KW-0694">RNA-binding</keyword>
<keyword id="KW-0698">rRNA processing</keyword>
<keyword id="KW-0949">S-adenosyl-L-methionine</keyword>
<keyword id="KW-0808">Transferase</keyword>
<gene>
    <name evidence="1" type="primary">rsmF</name>
    <name type="ordered locus">ECIAI39_1215</name>
</gene>
<feature type="chain" id="PRO_1000147566" description="Ribosomal RNA small subunit methyltransferase F">
    <location>
        <begin position="1"/>
        <end position="479"/>
    </location>
</feature>
<feature type="active site" description="Nucleophile" evidence="1">
    <location>
        <position position="247"/>
    </location>
</feature>
<feature type="binding site" evidence="1">
    <location>
        <begin position="125"/>
        <end position="131"/>
    </location>
    <ligand>
        <name>S-adenosyl-L-methionine</name>
        <dbReference type="ChEBI" id="CHEBI:59789"/>
    </ligand>
</feature>
<feature type="binding site" evidence="1">
    <location>
        <position position="149"/>
    </location>
    <ligand>
        <name>S-adenosyl-L-methionine</name>
        <dbReference type="ChEBI" id="CHEBI:59789"/>
    </ligand>
</feature>
<feature type="binding site" evidence="1">
    <location>
        <position position="176"/>
    </location>
    <ligand>
        <name>S-adenosyl-L-methionine</name>
        <dbReference type="ChEBI" id="CHEBI:59789"/>
    </ligand>
</feature>
<feature type="binding site" evidence="1">
    <location>
        <position position="194"/>
    </location>
    <ligand>
        <name>S-adenosyl-L-methionine</name>
        <dbReference type="ChEBI" id="CHEBI:59789"/>
    </ligand>
</feature>
<name>RSMF_ECO7I</name>
<comment type="function">
    <text evidence="1">Specifically methylates the cytosine at position 1407 (m5C1407) of 16S rRNA.</text>
</comment>
<comment type="catalytic activity">
    <reaction evidence="1">
        <text>cytidine(1407) in 16S rRNA + S-adenosyl-L-methionine = 5-methylcytidine(1407) in 16S rRNA + S-adenosyl-L-homocysteine + H(+)</text>
        <dbReference type="Rhea" id="RHEA:42756"/>
        <dbReference type="Rhea" id="RHEA-COMP:10223"/>
        <dbReference type="Rhea" id="RHEA-COMP:10224"/>
        <dbReference type="ChEBI" id="CHEBI:15378"/>
        <dbReference type="ChEBI" id="CHEBI:57856"/>
        <dbReference type="ChEBI" id="CHEBI:59789"/>
        <dbReference type="ChEBI" id="CHEBI:74483"/>
        <dbReference type="ChEBI" id="CHEBI:82748"/>
        <dbReference type="EC" id="2.1.1.178"/>
    </reaction>
</comment>
<comment type="subcellular location">
    <subcellularLocation>
        <location evidence="1">Cytoplasm</location>
    </subcellularLocation>
</comment>
<comment type="similarity">
    <text evidence="1">Belongs to the class I-like SAM-binding methyltransferase superfamily. RsmB/NOP family.</text>
</comment>
<protein>
    <recommendedName>
        <fullName evidence="1">Ribosomal RNA small subunit methyltransferase F</fullName>
        <ecNumber evidence="1">2.1.1.178</ecNumber>
    </recommendedName>
    <alternativeName>
        <fullName evidence="1">16S rRNA m5C1407 methyltransferase</fullName>
    </alternativeName>
    <alternativeName>
        <fullName evidence="1">rRNA (cytosine-C(5)-)-methyltransferase RsmF</fullName>
    </alternativeName>
</protein>
<organism>
    <name type="scientific">Escherichia coli O7:K1 (strain IAI39 / ExPEC)</name>
    <dbReference type="NCBI Taxonomy" id="585057"/>
    <lineage>
        <taxon>Bacteria</taxon>
        <taxon>Pseudomonadati</taxon>
        <taxon>Pseudomonadota</taxon>
        <taxon>Gammaproteobacteria</taxon>
        <taxon>Enterobacterales</taxon>
        <taxon>Enterobacteriaceae</taxon>
        <taxon>Escherichia</taxon>
    </lineage>
</organism>